<organism>
    <name type="scientific">Rattus norvegicus</name>
    <name type="common">Rat</name>
    <dbReference type="NCBI Taxonomy" id="10116"/>
    <lineage>
        <taxon>Eukaryota</taxon>
        <taxon>Metazoa</taxon>
        <taxon>Chordata</taxon>
        <taxon>Craniata</taxon>
        <taxon>Vertebrata</taxon>
        <taxon>Euteleostomi</taxon>
        <taxon>Mammalia</taxon>
        <taxon>Eutheria</taxon>
        <taxon>Euarchontoglires</taxon>
        <taxon>Glires</taxon>
        <taxon>Rodentia</taxon>
        <taxon>Myomorpha</taxon>
        <taxon>Muroidea</taxon>
        <taxon>Muridae</taxon>
        <taxon>Murinae</taxon>
        <taxon>Rattus</taxon>
    </lineage>
</organism>
<protein>
    <recommendedName>
        <fullName>Uncharacterized protein C8orf76 homolog</fullName>
    </recommendedName>
</protein>
<feature type="chain" id="PRO_0000225637" description="Uncharacterized protein C8orf76 homolog">
    <location>
        <begin position="1"/>
        <end position="374"/>
    </location>
</feature>
<feature type="region of interest" description="Disordered" evidence="1">
    <location>
        <begin position="182"/>
        <end position="201"/>
    </location>
</feature>
<feature type="compositionally biased region" description="Polar residues" evidence="1">
    <location>
        <begin position="188"/>
        <end position="197"/>
    </location>
</feature>
<keyword id="KW-1185">Reference proteome</keyword>
<dbReference type="EMBL" id="BC091232">
    <property type="protein sequence ID" value="AAH91232.1"/>
    <property type="molecule type" value="mRNA"/>
</dbReference>
<dbReference type="RefSeq" id="NP_001020178.1">
    <property type="nucleotide sequence ID" value="NM_001025007.1"/>
</dbReference>
<dbReference type="SMR" id="Q5BK24"/>
<dbReference type="FunCoup" id="Q5BK24">
    <property type="interactions" value="1290"/>
</dbReference>
<dbReference type="iPTMnet" id="Q5BK24"/>
<dbReference type="PhosphoSitePlus" id="Q5BK24"/>
<dbReference type="PaxDb" id="10116-ENSRNOP00000008382"/>
<dbReference type="Ensembl" id="ENSRNOT00000008382.6">
    <property type="protein sequence ID" value="ENSRNOP00000008382.4"/>
    <property type="gene ID" value="ENSRNOG00000006370.7"/>
</dbReference>
<dbReference type="GeneID" id="314992"/>
<dbReference type="KEGG" id="rno:314992"/>
<dbReference type="UCSC" id="RGD:1310852">
    <property type="organism name" value="rat"/>
</dbReference>
<dbReference type="AGR" id="RGD:1310852"/>
<dbReference type="CTD" id="314992"/>
<dbReference type="RGD" id="1310852">
    <property type="gene designation" value="C7h8orf76"/>
</dbReference>
<dbReference type="eggNOG" id="ENOG502QW95">
    <property type="taxonomic scope" value="Eukaryota"/>
</dbReference>
<dbReference type="GeneTree" id="ENSGT00390000011435"/>
<dbReference type="HOGENOM" id="CLU_044858_0_0_1"/>
<dbReference type="InParanoid" id="Q5BK24"/>
<dbReference type="OrthoDB" id="84474at9989"/>
<dbReference type="PhylomeDB" id="Q5BK24"/>
<dbReference type="TreeFam" id="TF332319"/>
<dbReference type="PRO" id="PR:Q5BK24"/>
<dbReference type="Proteomes" id="UP000002494">
    <property type="component" value="Chromosome 7"/>
</dbReference>
<dbReference type="Bgee" id="ENSRNOG00000006370">
    <property type="expression patterns" value="Expressed in skeletal muscle tissue and 18 other cell types or tissues"/>
</dbReference>
<dbReference type="ExpressionAtlas" id="Q5BK24">
    <property type="expression patterns" value="baseline and differential"/>
</dbReference>
<dbReference type="Gene3D" id="1.25.40.10">
    <property type="entry name" value="Tetratricopeptide repeat domain"/>
    <property type="match status" value="1"/>
</dbReference>
<dbReference type="InterPro" id="IPR041404">
    <property type="entry name" value="DUF5588"/>
</dbReference>
<dbReference type="InterPro" id="IPR011990">
    <property type="entry name" value="TPR-like_helical_dom_sf"/>
</dbReference>
<dbReference type="PANTHER" id="PTHR31919">
    <property type="entry name" value="ZINC FINGERS AND HOMEOBOXES PROTEIN 1, ISOFORM 2"/>
    <property type="match status" value="1"/>
</dbReference>
<dbReference type="PANTHER" id="PTHR31919:SF1">
    <property type="entry name" value="ZINC FINGERS AND HOMEOBOXES PROTEIN 1, ISOFORM 2"/>
    <property type="match status" value="1"/>
</dbReference>
<dbReference type="Pfam" id="PF17826">
    <property type="entry name" value="DUF5588"/>
    <property type="match status" value="1"/>
</dbReference>
<dbReference type="SUPFAM" id="SSF48452">
    <property type="entry name" value="TPR-like"/>
    <property type="match status" value="1"/>
</dbReference>
<evidence type="ECO:0000256" key="1">
    <source>
        <dbReference type="SAM" id="MobiDB-lite"/>
    </source>
</evidence>
<proteinExistence type="evidence at transcript level"/>
<reference key="1">
    <citation type="journal article" date="2004" name="Genome Res.">
        <title>The status, quality, and expansion of the NIH full-length cDNA project: the Mammalian Gene Collection (MGC).</title>
        <authorList>
            <consortium name="The MGC Project Team"/>
        </authorList>
    </citation>
    <scope>NUCLEOTIDE SEQUENCE [LARGE SCALE MRNA]</scope>
    <source>
        <tissue>Liver</tissue>
    </source>
</reference>
<name>CH076_RAT</name>
<sequence>METGCWVLGGEFEDSVFEQKPERQPEPPSSYGAKLCEPQWFYEETESSNDIEVLTLKKFRGDLAYRRQEYEKALQEYSSISKQLPSTNFAMKRDVQEGQARCLAHLGRHEEALEIAVDLESKATNTEHLTSALSLHLAIFSRRQSLEKTILYLQKLISLHPLNPWSWCKLAEAYLSPGPDLPALGESPQGQKSSASSDKAVRASSVHSGTGCLPFPAPSPDSAVFSVEASGCDTQQDMQNCLAARRAAAQTEAQRKACAALIRARLLLQLAQSQQTSFALEKNLRTQQEIAQKVKEFSFREDTLLLMEEAMGEDIVPERIKEELHPEVQCVGPAALTASVAASSKEFEDKWFRKVRDHFSPLEKQSHVDIQIMA</sequence>
<accession>Q5BK24</accession>